<feature type="chain" id="PRO_0000391206" description="NADH-quinone oxidoreductase subunit N">
    <location>
        <begin position="1"/>
        <end position="489"/>
    </location>
</feature>
<feature type="transmembrane region" description="Helical" evidence="1">
    <location>
        <begin position="8"/>
        <end position="28"/>
    </location>
</feature>
<feature type="transmembrane region" description="Helical" evidence="1">
    <location>
        <begin position="35"/>
        <end position="55"/>
    </location>
</feature>
<feature type="transmembrane region" description="Helical" evidence="1">
    <location>
        <begin position="75"/>
        <end position="95"/>
    </location>
</feature>
<feature type="transmembrane region" description="Helical" evidence="1">
    <location>
        <begin position="105"/>
        <end position="125"/>
    </location>
</feature>
<feature type="transmembrane region" description="Helical" evidence="1">
    <location>
        <begin position="127"/>
        <end position="147"/>
    </location>
</feature>
<feature type="transmembrane region" description="Helical" evidence="1">
    <location>
        <begin position="159"/>
        <end position="179"/>
    </location>
</feature>
<feature type="transmembrane region" description="Helical" evidence="1">
    <location>
        <begin position="203"/>
        <end position="223"/>
    </location>
</feature>
<feature type="transmembrane region" description="Helical" evidence="1">
    <location>
        <begin position="235"/>
        <end position="255"/>
    </location>
</feature>
<feature type="transmembrane region" description="Helical" evidence="1">
    <location>
        <begin position="271"/>
        <end position="291"/>
    </location>
</feature>
<feature type="transmembrane region" description="Helical" evidence="1">
    <location>
        <begin position="303"/>
        <end position="323"/>
    </location>
</feature>
<feature type="transmembrane region" description="Helical" evidence="1">
    <location>
        <begin position="329"/>
        <end position="349"/>
    </location>
</feature>
<feature type="transmembrane region" description="Helical" evidence="1">
    <location>
        <begin position="374"/>
        <end position="394"/>
    </location>
</feature>
<feature type="transmembrane region" description="Helical" evidence="1">
    <location>
        <begin position="407"/>
        <end position="427"/>
    </location>
</feature>
<feature type="transmembrane region" description="Helical" evidence="1">
    <location>
        <begin position="456"/>
        <end position="476"/>
    </location>
</feature>
<keyword id="KW-0997">Cell inner membrane</keyword>
<keyword id="KW-1003">Cell membrane</keyword>
<keyword id="KW-0472">Membrane</keyword>
<keyword id="KW-0520">NAD</keyword>
<keyword id="KW-0874">Quinone</keyword>
<keyword id="KW-1185">Reference proteome</keyword>
<keyword id="KW-1278">Translocase</keyword>
<keyword id="KW-0812">Transmembrane</keyword>
<keyword id="KW-1133">Transmembrane helix</keyword>
<keyword id="KW-0813">Transport</keyword>
<keyword id="KW-0830">Ubiquinone</keyword>
<accession>B4EZ47</accession>
<reference key="1">
    <citation type="journal article" date="2008" name="J. Bacteriol.">
        <title>Complete genome sequence of uropathogenic Proteus mirabilis, a master of both adherence and motility.</title>
        <authorList>
            <person name="Pearson M.M."/>
            <person name="Sebaihia M."/>
            <person name="Churcher C."/>
            <person name="Quail M.A."/>
            <person name="Seshasayee A.S."/>
            <person name="Luscombe N.M."/>
            <person name="Abdellah Z."/>
            <person name="Arrosmith C."/>
            <person name="Atkin B."/>
            <person name="Chillingworth T."/>
            <person name="Hauser H."/>
            <person name="Jagels K."/>
            <person name="Moule S."/>
            <person name="Mungall K."/>
            <person name="Norbertczak H."/>
            <person name="Rabbinowitsch E."/>
            <person name="Walker D."/>
            <person name="Whithead S."/>
            <person name="Thomson N.R."/>
            <person name="Rather P.N."/>
            <person name="Parkhill J."/>
            <person name="Mobley H.L.T."/>
        </authorList>
    </citation>
    <scope>NUCLEOTIDE SEQUENCE [LARGE SCALE GENOMIC DNA]</scope>
    <source>
        <strain>HI4320</strain>
    </source>
</reference>
<sequence>MTITPEQLIAMLPLLVVILTVVVVMLSIAWRRDHFTIATLTATGFIIALGSLYYVNALGVVDVTTLYHVDGYSSFFTALTIIAGLGTVAFAYPWLEGYQDNKEEFYMLVAIAVIGGILLSSAHHLASMFIGIELLTLPLFGLIGYAFQQRPSLEASIKYMLLSAAASSFLLFGMALLYAEAGNLSFTAMGQSLSDSNIHKPLVLAGLGMMLVGIGFKLSLFPFQLWTPDVYQGAPAPTGAFLATASKIGIFAVVMRLFLEAPAADSETLRMILGFMAIASILFGNIMALTQKNVKRLLGYSSVSHLGYLLVALIVLQYSPILAQETAEIYLAGYLFASLGAFGAIAVASSPYNKGELESLEDYRGLFWRRPVAAVVMSLMMLSLAGVPITLGFIGKLYVILAGIDSSLWWLTGMVVLGSAIGLFYYLRAAAIVFLRKPDNDNAPAVTTTSQNMATLITLVCAIIVIVLGVWPQPLIELTRFAIIAPAIN</sequence>
<organism>
    <name type="scientific">Proteus mirabilis (strain HI4320)</name>
    <dbReference type="NCBI Taxonomy" id="529507"/>
    <lineage>
        <taxon>Bacteria</taxon>
        <taxon>Pseudomonadati</taxon>
        <taxon>Pseudomonadota</taxon>
        <taxon>Gammaproteobacteria</taxon>
        <taxon>Enterobacterales</taxon>
        <taxon>Morganellaceae</taxon>
        <taxon>Proteus</taxon>
    </lineage>
</organism>
<dbReference type="EC" id="7.1.1.-" evidence="1"/>
<dbReference type="EMBL" id="AM942759">
    <property type="protein sequence ID" value="CAR43648.1"/>
    <property type="molecule type" value="Genomic_DNA"/>
</dbReference>
<dbReference type="RefSeq" id="WP_012368100.1">
    <property type="nucleotide sequence ID" value="NC_010554.1"/>
</dbReference>
<dbReference type="SMR" id="B4EZ47"/>
<dbReference type="EnsemblBacteria" id="CAR43648">
    <property type="protein sequence ID" value="CAR43648"/>
    <property type="gene ID" value="PMI1750"/>
</dbReference>
<dbReference type="GeneID" id="6803126"/>
<dbReference type="KEGG" id="pmr:PMI1750"/>
<dbReference type="PATRIC" id="fig|529507.6.peg.1700"/>
<dbReference type="eggNOG" id="COG1007">
    <property type="taxonomic scope" value="Bacteria"/>
</dbReference>
<dbReference type="HOGENOM" id="CLU_007100_1_5_6"/>
<dbReference type="Proteomes" id="UP000008319">
    <property type="component" value="Chromosome"/>
</dbReference>
<dbReference type="GO" id="GO:0005886">
    <property type="term" value="C:plasma membrane"/>
    <property type="evidence" value="ECO:0007669"/>
    <property type="project" value="UniProtKB-SubCell"/>
</dbReference>
<dbReference type="GO" id="GO:0008137">
    <property type="term" value="F:NADH dehydrogenase (ubiquinone) activity"/>
    <property type="evidence" value="ECO:0007669"/>
    <property type="project" value="InterPro"/>
</dbReference>
<dbReference type="GO" id="GO:0050136">
    <property type="term" value="F:NADH:ubiquinone reductase (non-electrogenic) activity"/>
    <property type="evidence" value="ECO:0007669"/>
    <property type="project" value="UniProtKB-UniRule"/>
</dbReference>
<dbReference type="GO" id="GO:0048038">
    <property type="term" value="F:quinone binding"/>
    <property type="evidence" value="ECO:0007669"/>
    <property type="project" value="UniProtKB-KW"/>
</dbReference>
<dbReference type="GO" id="GO:0042773">
    <property type="term" value="P:ATP synthesis coupled electron transport"/>
    <property type="evidence" value="ECO:0007669"/>
    <property type="project" value="InterPro"/>
</dbReference>
<dbReference type="HAMAP" id="MF_00445">
    <property type="entry name" value="NDH1_NuoN_1"/>
    <property type="match status" value="1"/>
</dbReference>
<dbReference type="InterPro" id="IPR010096">
    <property type="entry name" value="NADH-Q_OxRdtase_suN/2"/>
</dbReference>
<dbReference type="InterPro" id="IPR001750">
    <property type="entry name" value="ND/Mrp_TM"/>
</dbReference>
<dbReference type="NCBIfam" id="TIGR01770">
    <property type="entry name" value="NDH_I_N"/>
    <property type="match status" value="1"/>
</dbReference>
<dbReference type="NCBIfam" id="NF004439">
    <property type="entry name" value="PRK05777.1-1"/>
    <property type="match status" value="1"/>
</dbReference>
<dbReference type="PANTHER" id="PTHR22773">
    <property type="entry name" value="NADH DEHYDROGENASE"/>
    <property type="match status" value="1"/>
</dbReference>
<dbReference type="Pfam" id="PF00361">
    <property type="entry name" value="Proton_antipo_M"/>
    <property type="match status" value="1"/>
</dbReference>
<comment type="function">
    <text evidence="1">NDH-1 shuttles electrons from NADH, via FMN and iron-sulfur (Fe-S) centers, to quinones in the respiratory chain. The immediate electron acceptor for the enzyme in this species is believed to be ubiquinone. Couples the redox reaction to proton translocation (for every two electrons transferred, four hydrogen ions are translocated across the cytoplasmic membrane), and thus conserves the redox energy in a proton gradient.</text>
</comment>
<comment type="catalytic activity">
    <reaction evidence="1">
        <text>a quinone + NADH + 5 H(+)(in) = a quinol + NAD(+) + 4 H(+)(out)</text>
        <dbReference type="Rhea" id="RHEA:57888"/>
        <dbReference type="ChEBI" id="CHEBI:15378"/>
        <dbReference type="ChEBI" id="CHEBI:24646"/>
        <dbReference type="ChEBI" id="CHEBI:57540"/>
        <dbReference type="ChEBI" id="CHEBI:57945"/>
        <dbReference type="ChEBI" id="CHEBI:132124"/>
    </reaction>
</comment>
<comment type="subunit">
    <text evidence="1">NDH-1 is composed of 13 different subunits. Subunits NuoA, H, J, K, L, M, N constitute the membrane sector of the complex.</text>
</comment>
<comment type="subcellular location">
    <subcellularLocation>
        <location evidence="1">Cell inner membrane</location>
        <topology evidence="1">Multi-pass membrane protein</topology>
    </subcellularLocation>
</comment>
<comment type="similarity">
    <text evidence="1">Belongs to the complex I subunit 2 family.</text>
</comment>
<protein>
    <recommendedName>
        <fullName evidence="1">NADH-quinone oxidoreductase subunit N</fullName>
        <ecNumber evidence="1">7.1.1.-</ecNumber>
    </recommendedName>
    <alternativeName>
        <fullName evidence="1">NADH dehydrogenase I subunit N</fullName>
    </alternativeName>
    <alternativeName>
        <fullName evidence="1">NDH-1 subunit N</fullName>
    </alternativeName>
</protein>
<name>NUON_PROMH</name>
<proteinExistence type="inferred from homology"/>
<gene>
    <name evidence="1" type="primary">nuoN</name>
    <name type="ordered locus">PMI1750</name>
</gene>
<evidence type="ECO:0000255" key="1">
    <source>
        <dbReference type="HAMAP-Rule" id="MF_00445"/>
    </source>
</evidence>